<accession>P95379</accession>
<accession>Q9K1H3</accession>
<protein>
    <recommendedName>
        <fullName evidence="1">Acyl-[acyl-carrier-protein]--UDP-N-acetylglucosamine O-acyltransferase</fullName>
        <shortName evidence="1">UDP-N-acetylglucosamine acyltransferase</shortName>
        <ecNumber evidence="1">2.3.1.129</ecNumber>
    </recommendedName>
</protein>
<dbReference type="EC" id="2.3.1.129" evidence="1"/>
<dbReference type="EMBL" id="U79481">
    <property type="protein sequence ID" value="AAC45424.1"/>
    <property type="molecule type" value="Genomic_DNA"/>
</dbReference>
<dbReference type="EMBL" id="AE002098">
    <property type="protein sequence ID" value="AAF40635.1"/>
    <property type="molecule type" value="Genomic_DNA"/>
</dbReference>
<dbReference type="PIR" id="C81228">
    <property type="entry name" value="C81228"/>
</dbReference>
<dbReference type="RefSeq" id="NP_273236.1">
    <property type="nucleotide sequence ID" value="NC_003112.2"/>
</dbReference>
<dbReference type="RefSeq" id="WP_002243945.1">
    <property type="nucleotide sequence ID" value="NC_003112.2"/>
</dbReference>
<dbReference type="SMR" id="P95379"/>
<dbReference type="FunCoup" id="P95379">
    <property type="interactions" value="428"/>
</dbReference>
<dbReference type="STRING" id="122586.NMB0178"/>
<dbReference type="PaxDb" id="122586-NMB0178"/>
<dbReference type="KEGG" id="nme:NMB0178"/>
<dbReference type="PATRIC" id="fig|122586.8.peg.220"/>
<dbReference type="HOGENOM" id="CLU_061249_0_0_4"/>
<dbReference type="InParanoid" id="P95379"/>
<dbReference type="OrthoDB" id="9807278at2"/>
<dbReference type="UniPathway" id="UPA00359">
    <property type="reaction ID" value="UER00477"/>
</dbReference>
<dbReference type="Proteomes" id="UP000000425">
    <property type="component" value="Chromosome"/>
</dbReference>
<dbReference type="GO" id="GO:0005737">
    <property type="term" value="C:cytoplasm"/>
    <property type="evidence" value="ECO:0007669"/>
    <property type="project" value="UniProtKB-SubCell"/>
</dbReference>
<dbReference type="GO" id="GO:0016020">
    <property type="term" value="C:membrane"/>
    <property type="evidence" value="ECO:0007669"/>
    <property type="project" value="GOC"/>
</dbReference>
<dbReference type="GO" id="GO:0008780">
    <property type="term" value="F:acyl-[acyl-carrier-protein]-UDP-N-acetylglucosamine O-acyltransferase activity"/>
    <property type="evidence" value="ECO:0007669"/>
    <property type="project" value="UniProtKB-UniRule"/>
</dbReference>
<dbReference type="GO" id="GO:0009245">
    <property type="term" value="P:lipid A biosynthetic process"/>
    <property type="evidence" value="ECO:0007669"/>
    <property type="project" value="UniProtKB-UniRule"/>
</dbReference>
<dbReference type="CDD" id="cd03351">
    <property type="entry name" value="LbH_UDP-GlcNAc_AT"/>
    <property type="match status" value="1"/>
</dbReference>
<dbReference type="Gene3D" id="2.160.10.10">
    <property type="entry name" value="Hexapeptide repeat proteins"/>
    <property type="match status" value="1"/>
</dbReference>
<dbReference type="Gene3D" id="1.20.1180.10">
    <property type="entry name" value="Udp N-acetylglucosamine O-acyltransferase, C-terminal domain"/>
    <property type="match status" value="1"/>
</dbReference>
<dbReference type="HAMAP" id="MF_00387">
    <property type="entry name" value="LpxA"/>
    <property type="match status" value="1"/>
</dbReference>
<dbReference type="InterPro" id="IPR029098">
    <property type="entry name" value="Acetyltransf_C"/>
</dbReference>
<dbReference type="InterPro" id="IPR037157">
    <property type="entry name" value="Acetyltransf_C_sf"/>
</dbReference>
<dbReference type="InterPro" id="IPR001451">
    <property type="entry name" value="Hexapep"/>
</dbReference>
<dbReference type="InterPro" id="IPR010137">
    <property type="entry name" value="Lipid_A_LpxA"/>
</dbReference>
<dbReference type="InterPro" id="IPR011004">
    <property type="entry name" value="Trimer_LpxA-like_sf"/>
</dbReference>
<dbReference type="NCBIfam" id="TIGR01852">
    <property type="entry name" value="lipid_A_lpxA"/>
    <property type="match status" value="1"/>
</dbReference>
<dbReference type="NCBIfam" id="NF003657">
    <property type="entry name" value="PRK05289.1"/>
    <property type="match status" value="1"/>
</dbReference>
<dbReference type="PANTHER" id="PTHR43480">
    <property type="entry name" value="ACYL-[ACYL-CARRIER-PROTEIN]--UDP-N-ACETYLGLUCOSAMINE O-ACYLTRANSFERASE"/>
    <property type="match status" value="1"/>
</dbReference>
<dbReference type="PANTHER" id="PTHR43480:SF1">
    <property type="entry name" value="ACYL-[ACYL-CARRIER-PROTEIN]--UDP-N-ACETYLGLUCOSAMINE O-ACYLTRANSFERASE, MITOCHONDRIAL-RELATED"/>
    <property type="match status" value="1"/>
</dbReference>
<dbReference type="Pfam" id="PF13720">
    <property type="entry name" value="Acetyltransf_11"/>
    <property type="match status" value="1"/>
</dbReference>
<dbReference type="Pfam" id="PF00132">
    <property type="entry name" value="Hexapep"/>
    <property type="match status" value="1"/>
</dbReference>
<dbReference type="PIRSF" id="PIRSF000456">
    <property type="entry name" value="UDP-GlcNAc_acltr"/>
    <property type="match status" value="1"/>
</dbReference>
<dbReference type="SUPFAM" id="SSF51161">
    <property type="entry name" value="Trimeric LpxA-like enzymes"/>
    <property type="match status" value="1"/>
</dbReference>
<comment type="function">
    <text evidence="1">Involved in the biosynthesis of lipid A, a phosphorylated glycolipid that anchors the lipopolysaccharide to the outer membrane of the cell.</text>
</comment>
<comment type="catalytic activity">
    <reaction evidence="1">
        <text>a (3R)-hydroxyacyl-[ACP] + UDP-N-acetyl-alpha-D-glucosamine = a UDP-3-O-[(3R)-3-hydroxyacyl]-N-acetyl-alpha-D-glucosamine + holo-[ACP]</text>
        <dbReference type="Rhea" id="RHEA:67812"/>
        <dbReference type="Rhea" id="RHEA-COMP:9685"/>
        <dbReference type="Rhea" id="RHEA-COMP:9945"/>
        <dbReference type="ChEBI" id="CHEBI:57705"/>
        <dbReference type="ChEBI" id="CHEBI:64479"/>
        <dbReference type="ChEBI" id="CHEBI:78827"/>
        <dbReference type="ChEBI" id="CHEBI:173225"/>
        <dbReference type="EC" id="2.3.1.129"/>
    </reaction>
</comment>
<comment type="pathway">
    <text evidence="1">Glycolipid biosynthesis; lipid IV(A) biosynthesis; lipid IV(A) from (3R)-3-hydroxytetradecanoyl-[acyl-carrier-protein] and UDP-N-acetyl-alpha-D-glucosamine: step 1/6.</text>
</comment>
<comment type="subunit">
    <text evidence="1">Homotrimer.</text>
</comment>
<comment type="subcellular location">
    <subcellularLocation>
        <location evidence="1">Cytoplasm</location>
    </subcellularLocation>
</comment>
<comment type="similarity">
    <text evidence="1">Belongs to the transferase hexapeptide repeat family. LpxA subfamily.</text>
</comment>
<gene>
    <name evidence="1" type="primary">lpxA</name>
    <name type="ordered locus">NMB0178</name>
</gene>
<feature type="chain" id="PRO_0000188055" description="Acyl-[acyl-carrier-protein]--UDP-N-acetylglucosamine O-acyltransferase">
    <location>
        <begin position="1"/>
        <end position="258"/>
    </location>
</feature>
<feature type="sequence conflict" description="In Ref. 1; AAC45424." evidence="2" ref="1">
    <original>L</original>
    <variation>F</variation>
    <location>
        <position position="64"/>
    </location>
</feature>
<proteinExistence type="inferred from homology"/>
<reference key="1">
    <citation type="journal article" date="1997" name="Gene">
        <title>Isolation and characterization of the Neisseria meningitidis lpxD-fabZ-lpxA gene cluster involved in lipid A biosynthesis.</title>
        <authorList>
            <person name="Steeghs L."/>
            <person name="Jennings M.P."/>
            <person name="Poolman J.T."/>
            <person name="Der Ley P."/>
        </authorList>
    </citation>
    <scope>NUCLEOTIDE SEQUENCE [GENOMIC DNA]</scope>
    <source>
        <strain>ATCC BAA-335 / MC58</strain>
    </source>
</reference>
<reference key="2">
    <citation type="journal article" date="2000" name="Science">
        <title>Complete genome sequence of Neisseria meningitidis serogroup B strain MC58.</title>
        <authorList>
            <person name="Tettelin H."/>
            <person name="Saunders N.J."/>
            <person name="Heidelberg J.F."/>
            <person name="Jeffries A.C."/>
            <person name="Nelson K.E."/>
            <person name="Eisen J.A."/>
            <person name="Ketchum K.A."/>
            <person name="Hood D.W."/>
            <person name="Peden J.F."/>
            <person name="Dodson R.J."/>
            <person name="Nelson W.C."/>
            <person name="Gwinn M.L."/>
            <person name="DeBoy R.T."/>
            <person name="Peterson J.D."/>
            <person name="Hickey E.K."/>
            <person name="Haft D.H."/>
            <person name="Salzberg S.L."/>
            <person name="White O."/>
            <person name="Fleischmann R.D."/>
            <person name="Dougherty B.A."/>
            <person name="Mason T.M."/>
            <person name="Ciecko A."/>
            <person name="Parksey D.S."/>
            <person name="Blair E."/>
            <person name="Cittone H."/>
            <person name="Clark E.B."/>
            <person name="Cotton M.D."/>
            <person name="Utterback T.R."/>
            <person name="Khouri H.M."/>
            <person name="Qin H."/>
            <person name="Vamathevan J.J."/>
            <person name="Gill J."/>
            <person name="Scarlato V."/>
            <person name="Masignani V."/>
            <person name="Pizza M."/>
            <person name="Grandi G."/>
            <person name="Sun L."/>
            <person name="Smith H.O."/>
            <person name="Fraser C.M."/>
            <person name="Moxon E.R."/>
            <person name="Rappuoli R."/>
            <person name="Venter J.C."/>
        </authorList>
    </citation>
    <scope>NUCLEOTIDE SEQUENCE [LARGE SCALE GENOMIC DNA]</scope>
    <source>
        <strain>ATCC BAA-335 / MC58</strain>
    </source>
</reference>
<evidence type="ECO:0000255" key="1">
    <source>
        <dbReference type="HAMAP-Rule" id="MF_00387"/>
    </source>
</evidence>
<evidence type="ECO:0000305" key="2"/>
<organism>
    <name type="scientific">Neisseria meningitidis serogroup B (strain ATCC BAA-335 / MC58)</name>
    <dbReference type="NCBI Taxonomy" id="122586"/>
    <lineage>
        <taxon>Bacteria</taxon>
        <taxon>Pseudomonadati</taxon>
        <taxon>Pseudomonadota</taxon>
        <taxon>Betaproteobacteria</taxon>
        <taxon>Neisseriales</taxon>
        <taxon>Neisseriaceae</taxon>
        <taxon>Neisseria</taxon>
    </lineage>
</organism>
<name>LPXA_NEIMB</name>
<sequence>MTLIHPTAVIDPKAELDSGVKVGAYTVIGPNVQIGANTEIGPHAVINGHTSIGENNRIFQFASLGEIPQDKKYRDEPTKLIIGNGNTIREFTTFNLGTVTGIGETRIGDDNWIMAYCHLAHDCVIGNHTIFANNASLAGHVTIGDYVVLGGYTLVFQFCRIGDYAMTAFAAGVHKDVPPYFMASGYRAEPAGLNSEGMRRNGFTAEQISAVKDVYKTLYHRGIPFEEAKADILRRAETQAELAVFRDFFAQSARGIIR</sequence>
<keyword id="KW-0012">Acyltransferase</keyword>
<keyword id="KW-0963">Cytoplasm</keyword>
<keyword id="KW-0441">Lipid A biosynthesis</keyword>
<keyword id="KW-0444">Lipid biosynthesis</keyword>
<keyword id="KW-0443">Lipid metabolism</keyword>
<keyword id="KW-1185">Reference proteome</keyword>
<keyword id="KW-0677">Repeat</keyword>
<keyword id="KW-0808">Transferase</keyword>